<feature type="chain" id="PRO_0000064896" description="Cellulose synthase operon protein D">
    <location>
        <begin position="1"/>
        <end position="156"/>
    </location>
</feature>
<reference key="1">
    <citation type="journal article" date="1990" name="Proc. Natl. Acad. Sci. U.S.A.">
        <title>Genetic organization of the cellulose synthase operon in Acetobacter xylinum.</title>
        <authorList>
            <person name="Wong H.C."/>
            <person name="Fear A.L."/>
            <person name="Calhoon R.D."/>
            <person name="Eichinger G.H."/>
            <person name="Mayer R."/>
            <person name="Amikam D."/>
            <person name="Benziman M."/>
            <person name="Gelfand D.H."/>
            <person name="Meade J.H."/>
            <person name="Emerick A.W."/>
            <person name="Bruner R."/>
            <person name="Ben-Bassat A."/>
            <person name="Tal R."/>
        </authorList>
    </citation>
    <scope>NUCLEOTIDE SEQUENCE [GENOMIC DNA]</scope>
    <source>
        <strain>1306-3</strain>
    </source>
</reference>
<accession>P0DTX0</accession>
<accession>O82862</accession>
<accession>P19451</accession>
<evidence type="ECO:0000303" key="1">
    <source>
    </source>
</evidence>
<keyword id="KW-0135">Cellulose biosynthesis</keyword>
<proteinExistence type="predicted"/>
<dbReference type="EMBL" id="M37202">
    <property type="protein sequence ID" value="AAA21887.1"/>
    <property type="molecule type" value="Genomic_DNA"/>
</dbReference>
<dbReference type="PIR" id="D43735">
    <property type="entry name" value="D43735"/>
</dbReference>
<dbReference type="SMR" id="P0DTX0"/>
<dbReference type="UniPathway" id="UPA00694"/>
<dbReference type="GO" id="GO:0030244">
    <property type="term" value="P:cellulose biosynthetic process"/>
    <property type="evidence" value="ECO:0007669"/>
    <property type="project" value="UniProtKB-KW"/>
</dbReference>
<dbReference type="Gene3D" id="1.20.5.3790">
    <property type="match status" value="1"/>
</dbReference>
<dbReference type="Gene3D" id="3.30.70.2590">
    <property type="match status" value="1"/>
</dbReference>
<dbReference type="InterPro" id="IPR022798">
    <property type="entry name" value="BcsD_bac"/>
</dbReference>
<dbReference type="InterPro" id="IPR038470">
    <property type="entry name" value="Cellsynth_D_sf"/>
</dbReference>
<dbReference type="Pfam" id="PF03500">
    <property type="entry name" value="Cellsynth_D"/>
    <property type="match status" value="1"/>
</dbReference>
<dbReference type="PRINTS" id="PR01442">
    <property type="entry name" value="CELLSNTHASED"/>
</dbReference>
<comment type="function">
    <text>May have a major role in the perfection of crystallization, involved either in the pore structure itself or in the organization of the pores within the linear array of terminal synthesizing complexes (TCs).</text>
</comment>
<comment type="pathway">
    <text>Glycan metabolism; bacterial cellulose biosynthesis.</text>
</comment>
<sequence>MTTLNAKPDFSLFLQALSWEIDDQAGIEVRNDLLREVGRGMAGRFQPPLCNTIHQLQIELNALLAMINWGYVKLDLLAEEQAMRIVHEDLPQVGSAGEPAGTWLAPVLEGLYGRWITSQPGAFGDYVVTRDIDAEDLNSVPAQTIILYMRTRSAAT</sequence>
<protein>
    <recommendedName>
        <fullName>Cellulose synthase operon protein D</fullName>
    </recommendedName>
</protein>
<gene>
    <name evidence="1" type="primary">bcsD</name>
</gene>
<organism>
    <name type="scientific">Komagataeibacter xylinus</name>
    <name type="common">Gluconacetobacter xylinus</name>
    <dbReference type="NCBI Taxonomy" id="28448"/>
    <lineage>
        <taxon>Bacteria</taxon>
        <taxon>Pseudomonadati</taxon>
        <taxon>Pseudomonadota</taxon>
        <taxon>Alphaproteobacteria</taxon>
        <taxon>Acetobacterales</taxon>
        <taxon>Acetobacteraceae</taxon>
        <taxon>Komagataeibacter</taxon>
    </lineage>
</organism>
<name>BCSD1_KOMXY</name>